<proteinExistence type="evidence at transcript level"/>
<comment type="function">
    <text evidence="1">Transcription factor that binds specifically to a 5'-AA[AG]G-3' consensus core sequence.</text>
</comment>
<comment type="subcellular location">
    <subcellularLocation>
        <location evidence="4">Nucleus</location>
    </subcellularLocation>
</comment>
<gene>
    <name type="primary">DOF3.1</name>
    <name type="synonym">ADOF2</name>
    <name type="ordered locus">At3g21270</name>
    <name type="ORF">MXL8.14</name>
</gene>
<evidence type="ECO:0000250" key="1"/>
<evidence type="ECO:0000255" key="2">
    <source>
        <dbReference type="PROSITE-ProRule" id="PRU00071"/>
    </source>
</evidence>
<evidence type="ECO:0000256" key="3">
    <source>
        <dbReference type="SAM" id="MobiDB-lite"/>
    </source>
</evidence>
<evidence type="ECO:0000305" key="4"/>
<organism>
    <name type="scientific">Arabidopsis thaliana</name>
    <name type="common">Mouse-ear cress</name>
    <dbReference type="NCBI Taxonomy" id="3702"/>
    <lineage>
        <taxon>Eukaryota</taxon>
        <taxon>Viridiplantae</taxon>
        <taxon>Streptophyta</taxon>
        <taxon>Embryophyta</taxon>
        <taxon>Tracheophyta</taxon>
        <taxon>Spermatophyta</taxon>
        <taxon>Magnoliopsida</taxon>
        <taxon>eudicotyledons</taxon>
        <taxon>Gunneridae</taxon>
        <taxon>Pentapetalae</taxon>
        <taxon>rosids</taxon>
        <taxon>malvids</taxon>
        <taxon>Brassicales</taxon>
        <taxon>Brassicaceae</taxon>
        <taxon>Camelineae</taxon>
        <taxon>Arabidopsis</taxon>
    </lineage>
</organism>
<feature type="chain" id="PRO_0000074277" description="Dof zinc finger protein DOF3.1">
    <location>
        <begin position="1"/>
        <end position="204"/>
    </location>
</feature>
<feature type="zinc finger region" description="Dof-type" evidence="2">
    <location>
        <begin position="29"/>
        <end position="83"/>
    </location>
</feature>
<feature type="region of interest" description="Disordered" evidence="3">
    <location>
        <begin position="1"/>
        <end position="25"/>
    </location>
</feature>
<feature type="region of interest" description="Disordered" evidence="3">
    <location>
        <begin position="70"/>
        <end position="128"/>
    </location>
</feature>
<feature type="region of interest" description="Disordered" evidence="3">
    <location>
        <begin position="182"/>
        <end position="204"/>
    </location>
</feature>
<feature type="compositionally biased region" description="Low complexity" evidence="3">
    <location>
        <begin position="84"/>
        <end position="102"/>
    </location>
</feature>
<feature type="compositionally biased region" description="Basic and acidic residues" evidence="3">
    <location>
        <begin position="106"/>
        <end position="124"/>
    </location>
</feature>
<feature type="binding site" evidence="2">
    <location>
        <position position="31"/>
    </location>
    <ligand>
        <name>Zn(2+)</name>
        <dbReference type="ChEBI" id="CHEBI:29105"/>
    </ligand>
</feature>
<feature type="binding site" evidence="2">
    <location>
        <position position="34"/>
    </location>
    <ligand>
        <name>Zn(2+)</name>
        <dbReference type="ChEBI" id="CHEBI:29105"/>
    </ligand>
</feature>
<feature type="binding site" evidence="2">
    <location>
        <position position="56"/>
    </location>
    <ligand>
        <name>Zn(2+)</name>
        <dbReference type="ChEBI" id="CHEBI:29105"/>
    </ligand>
</feature>
<feature type="binding site" evidence="2">
    <location>
        <position position="59"/>
    </location>
    <ligand>
        <name>Zn(2+)</name>
        <dbReference type="ChEBI" id="CHEBI:29105"/>
    </ligand>
</feature>
<feature type="sequence conflict" description="In Ref. 4; AAK76521." evidence="4" ref="4">
    <original>S</original>
    <variation>T</variation>
    <location>
        <position position="97"/>
    </location>
</feature>
<protein>
    <recommendedName>
        <fullName>Dof zinc finger protein DOF3.1</fullName>
        <shortName>AtDOF3.1</shortName>
    </recommendedName>
</protein>
<dbReference type="EMBL" id="AB017565">
    <property type="protein sequence ID" value="BAA33197.1"/>
    <property type="molecule type" value="mRNA"/>
</dbReference>
<dbReference type="EMBL" id="AB023045">
    <property type="protein sequence ID" value="BAB01720.1"/>
    <property type="molecule type" value="Genomic_DNA"/>
</dbReference>
<dbReference type="EMBL" id="CP002686">
    <property type="protein sequence ID" value="AEE76486.1"/>
    <property type="molecule type" value="Genomic_DNA"/>
</dbReference>
<dbReference type="EMBL" id="AY045847">
    <property type="protein sequence ID" value="AAK76521.1"/>
    <property type="molecule type" value="mRNA"/>
</dbReference>
<dbReference type="EMBL" id="AY150391">
    <property type="protein sequence ID" value="AAN12936.1"/>
    <property type="molecule type" value="mRNA"/>
</dbReference>
<dbReference type="PIR" id="T52045">
    <property type="entry name" value="T52045"/>
</dbReference>
<dbReference type="RefSeq" id="NP_188764.1">
    <property type="nucleotide sequence ID" value="NM_113022.5"/>
</dbReference>
<dbReference type="BioGRID" id="7013">
    <property type="interactions" value="1"/>
</dbReference>
<dbReference type="FunCoup" id="Q94AR6">
    <property type="interactions" value="373"/>
</dbReference>
<dbReference type="STRING" id="3702.Q94AR6"/>
<dbReference type="PaxDb" id="3702-AT3G21270.1"/>
<dbReference type="ProteomicsDB" id="222111"/>
<dbReference type="EnsemblPlants" id="AT3G21270.1">
    <property type="protein sequence ID" value="AT3G21270.1"/>
    <property type="gene ID" value="AT3G21270"/>
</dbReference>
<dbReference type="GeneID" id="821681"/>
<dbReference type="Gramene" id="AT3G21270.1">
    <property type="protein sequence ID" value="AT3G21270.1"/>
    <property type="gene ID" value="AT3G21270"/>
</dbReference>
<dbReference type="KEGG" id="ath:AT3G21270"/>
<dbReference type="Araport" id="AT3G21270"/>
<dbReference type="TAIR" id="AT3G21270">
    <property type="gene designation" value="DOF2"/>
</dbReference>
<dbReference type="eggNOG" id="ENOG502QUYN">
    <property type="taxonomic scope" value="Eukaryota"/>
</dbReference>
<dbReference type="HOGENOM" id="CLU_036438_6_0_1"/>
<dbReference type="InParanoid" id="Q94AR6"/>
<dbReference type="OMA" id="AAYYQTM"/>
<dbReference type="OrthoDB" id="1927254at2759"/>
<dbReference type="PhylomeDB" id="Q94AR6"/>
<dbReference type="PRO" id="PR:Q94AR6"/>
<dbReference type="Proteomes" id="UP000006548">
    <property type="component" value="Chromosome 3"/>
</dbReference>
<dbReference type="ExpressionAtlas" id="Q94AR6">
    <property type="expression patterns" value="baseline and differential"/>
</dbReference>
<dbReference type="GO" id="GO:0005634">
    <property type="term" value="C:nucleus"/>
    <property type="evidence" value="ECO:0007669"/>
    <property type="project" value="UniProtKB-SubCell"/>
</dbReference>
<dbReference type="GO" id="GO:0003700">
    <property type="term" value="F:DNA-binding transcription factor activity"/>
    <property type="evidence" value="ECO:0000250"/>
    <property type="project" value="TAIR"/>
</dbReference>
<dbReference type="GO" id="GO:0000976">
    <property type="term" value="F:transcription cis-regulatory region binding"/>
    <property type="evidence" value="ECO:0000353"/>
    <property type="project" value="TAIR"/>
</dbReference>
<dbReference type="GO" id="GO:0008270">
    <property type="term" value="F:zinc ion binding"/>
    <property type="evidence" value="ECO:0007669"/>
    <property type="project" value="UniProtKB-KW"/>
</dbReference>
<dbReference type="GO" id="GO:0006355">
    <property type="term" value="P:regulation of DNA-templated transcription"/>
    <property type="evidence" value="ECO:0000304"/>
    <property type="project" value="TAIR"/>
</dbReference>
<dbReference type="InterPro" id="IPR045174">
    <property type="entry name" value="Dof"/>
</dbReference>
<dbReference type="InterPro" id="IPR003851">
    <property type="entry name" value="Znf_Dof"/>
</dbReference>
<dbReference type="PANTHER" id="PTHR31992">
    <property type="entry name" value="DOF ZINC FINGER PROTEIN DOF1.4-RELATED"/>
    <property type="match status" value="1"/>
</dbReference>
<dbReference type="PANTHER" id="PTHR31992:SF62">
    <property type="entry name" value="DOF ZINC FINGER PROTEIN DOF3.1"/>
    <property type="match status" value="1"/>
</dbReference>
<dbReference type="Pfam" id="PF02701">
    <property type="entry name" value="Zn_ribbon_Dof"/>
    <property type="match status" value="1"/>
</dbReference>
<dbReference type="PROSITE" id="PS01361">
    <property type="entry name" value="ZF_DOF_1"/>
    <property type="match status" value="1"/>
</dbReference>
<dbReference type="PROSITE" id="PS50884">
    <property type="entry name" value="ZF_DOF_2"/>
    <property type="match status" value="1"/>
</dbReference>
<accession>Q94AR6</accession>
<accession>O82156</accession>
<keyword id="KW-0238">DNA-binding</keyword>
<keyword id="KW-0479">Metal-binding</keyword>
<keyword id="KW-0539">Nucleus</keyword>
<keyword id="KW-1185">Reference proteome</keyword>
<keyword id="KW-0804">Transcription</keyword>
<keyword id="KW-0805">Transcription regulation</keyword>
<keyword id="KW-0862">Zinc</keyword>
<keyword id="KW-0863">Zinc-finger</keyword>
<sequence length="204" mass="22530">MQDPAAYYQTMMAKQQQQQQPQFAEQEQLKCPRCDSPNTKFCYYNNYNLSQPRHFCKSCRRYWTKGGALRNVPVGGGSRKNATKRSTSSSSSASSPSNSSQNKKTKNPDPDPDPRNSQKPDLDPTRMLYGFPIGDQDVKGMEIGGSFSSLLANNMQLGLGGGGIMLDGSGWDHPGMGLGLRRTEPGNNNNNPWTDLAMNRAEKN</sequence>
<reference key="1">
    <citation type="submission" date="1998-09" db="EMBL/GenBank/DDBJ databases">
        <title>cDNA cloning and gene expression of Dof zinc finger protein in Arabidopsis thaliana.</title>
        <authorList>
            <person name="Itagaki T."/>
            <person name="Kisu Y."/>
            <person name="Esaka M."/>
        </authorList>
    </citation>
    <scope>NUCLEOTIDE SEQUENCE [MRNA]</scope>
    <source>
        <tissue>Seedling</tissue>
    </source>
</reference>
<reference key="2">
    <citation type="journal article" date="2000" name="DNA Res.">
        <title>Structural analysis of Arabidopsis thaliana chromosome 3. I. Sequence features of the regions of 4,504,864 bp covered by sixty P1 and TAC clones.</title>
        <authorList>
            <person name="Sato S."/>
            <person name="Nakamura Y."/>
            <person name="Kaneko T."/>
            <person name="Katoh T."/>
            <person name="Asamizu E."/>
            <person name="Tabata S."/>
        </authorList>
    </citation>
    <scope>NUCLEOTIDE SEQUENCE [LARGE SCALE GENOMIC DNA]</scope>
    <source>
        <strain>cv. Columbia</strain>
    </source>
</reference>
<reference key="3">
    <citation type="journal article" date="2017" name="Plant J.">
        <title>Araport11: a complete reannotation of the Arabidopsis thaliana reference genome.</title>
        <authorList>
            <person name="Cheng C.Y."/>
            <person name="Krishnakumar V."/>
            <person name="Chan A.P."/>
            <person name="Thibaud-Nissen F."/>
            <person name="Schobel S."/>
            <person name="Town C.D."/>
        </authorList>
    </citation>
    <scope>GENOME REANNOTATION</scope>
    <source>
        <strain>cv. Columbia</strain>
    </source>
</reference>
<reference key="4">
    <citation type="journal article" date="2003" name="Science">
        <title>Empirical analysis of transcriptional activity in the Arabidopsis genome.</title>
        <authorList>
            <person name="Yamada K."/>
            <person name="Lim J."/>
            <person name="Dale J.M."/>
            <person name="Chen H."/>
            <person name="Shinn P."/>
            <person name="Palm C.J."/>
            <person name="Southwick A.M."/>
            <person name="Wu H.C."/>
            <person name="Kim C.J."/>
            <person name="Nguyen M."/>
            <person name="Pham P.K."/>
            <person name="Cheuk R.F."/>
            <person name="Karlin-Newmann G."/>
            <person name="Liu S.X."/>
            <person name="Lam B."/>
            <person name="Sakano H."/>
            <person name="Wu T."/>
            <person name="Yu G."/>
            <person name="Miranda M."/>
            <person name="Quach H.L."/>
            <person name="Tripp M."/>
            <person name="Chang C.H."/>
            <person name="Lee J.M."/>
            <person name="Toriumi M.J."/>
            <person name="Chan M.M."/>
            <person name="Tang C.C."/>
            <person name="Onodera C.S."/>
            <person name="Deng J.M."/>
            <person name="Akiyama K."/>
            <person name="Ansari Y."/>
            <person name="Arakawa T."/>
            <person name="Banh J."/>
            <person name="Banno F."/>
            <person name="Bowser L."/>
            <person name="Brooks S.Y."/>
            <person name="Carninci P."/>
            <person name="Chao Q."/>
            <person name="Choy N."/>
            <person name="Enju A."/>
            <person name="Goldsmith A.D."/>
            <person name="Gurjal M."/>
            <person name="Hansen N.F."/>
            <person name="Hayashizaki Y."/>
            <person name="Johnson-Hopson C."/>
            <person name="Hsuan V.W."/>
            <person name="Iida K."/>
            <person name="Karnes M."/>
            <person name="Khan S."/>
            <person name="Koesema E."/>
            <person name="Ishida J."/>
            <person name="Jiang P.X."/>
            <person name="Jones T."/>
            <person name="Kawai J."/>
            <person name="Kamiya A."/>
            <person name="Meyers C."/>
            <person name="Nakajima M."/>
            <person name="Narusaka M."/>
            <person name="Seki M."/>
            <person name="Sakurai T."/>
            <person name="Satou M."/>
            <person name="Tamse R."/>
            <person name="Vaysberg M."/>
            <person name="Wallender E.K."/>
            <person name="Wong C."/>
            <person name="Yamamura Y."/>
            <person name="Yuan S."/>
            <person name="Shinozaki K."/>
            <person name="Davis R.W."/>
            <person name="Theologis A."/>
            <person name="Ecker J.R."/>
        </authorList>
    </citation>
    <scope>NUCLEOTIDE SEQUENCE [LARGE SCALE MRNA]</scope>
    <source>
        <strain>cv. Columbia</strain>
    </source>
</reference>
<reference key="5">
    <citation type="journal article" date="2002" name="Trends Plant Sci.">
        <title>The Dof family of plant transcription factors.</title>
        <authorList>
            <person name="Yanagisawa S."/>
        </authorList>
    </citation>
    <scope>GENE FAMILY</scope>
    <scope>NOMENCLATURE</scope>
</reference>
<name>DOF31_ARATH</name>